<keyword id="KW-0131">Cell cycle</keyword>
<keyword id="KW-0132">Cell division</keyword>
<keyword id="KW-0966">Cell projection</keyword>
<keyword id="KW-0963">Cytoplasm</keyword>
<keyword id="KW-0206">Cytoskeleton</keyword>
<keyword id="KW-0488">Methylation</keyword>
<keyword id="KW-0597">Phosphoprotein</keyword>
<keyword id="KW-1185">Reference proteome</keyword>
<keyword id="KW-0832">Ubl conjugation</keyword>
<feature type="chain" id="PRO_0000351654" description="Ataxin-10">
    <location>
        <begin position="1"/>
        <end position="475"/>
    </location>
</feature>
<feature type="modified residue" description="Omega-N-methylarginine" evidence="1">
    <location>
        <position position="10"/>
    </location>
</feature>
<feature type="modified residue" description="Phosphoserine" evidence="3">
    <location>
        <position position="12"/>
    </location>
</feature>
<feature type="modified residue" description="Phosphoserine" evidence="3">
    <location>
        <position position="77"/>
    </location>
</feature>
<feature type="modified residue" description="Phosphothreonine" evidence="3">
    <location>
        <position position="82"/>
    </location>
</feature>
<feature type="modified residue" description="Phosphoserine" evidence="3">
    <location>
        <position position="430"/>
    </location>
</feature>
<protein>
    <recommendedName>
        <fullName>Ataxin-10</fullName>
    </recommendedName>
    <alternativeName>
        <fullName>Spinocerebellar ataxia type 10 protein homolog</fullName>
    </alternativeName>
</protein>
<dbReference type="EMBL" id="BC109580">
    <property type="protein sequence ID" value="AAI09581.1"/>
    <property type="molecule type" value="mRNA"/>
</dbReference>
<dbReference type="RefSeq" id="NP_001070519.1">
    <property type="nucleotide sequence ID" value="NM_001077051.2"/>
</dbReference>
<dbReference type="SMR" id="Q2TBW0"/>
<dbReference type="FunCoup" id="Q2TBW0">
    <property type="interactions" value="2462"/>
</dbReference>
<dbReference type="STRING" id="9913.ENSBTAP00000012308"/>
<dbReference type="PaxDb" id="9913-ENSBTAP00000012308"/>
<dbReference type="GeneID" id="767990"/>
<dbReference type="KEGG" id="bta:767990"/>
<dbReference type="CTD" id="25814"/>
<dbReference type="eggNOG" id="KOG2676">
    <property type="taxonomic scope" value="Eukaryota"/>
</dbReference>
<dbReference type="InParanoid" id="Q2TBW0"/>
<dbReference type="OrthoDB" id="379794at2759"/>
<dbReference type="Proteomes" id="UP000009136">
    <property type="component" value="Unplaced"/>
</dbReference>
<dbReference type="GO" id="GO:0005814">
    <property type="term" value="C:centriole"/>
    <property type="evidence" value="ECO:0000250"/>
    <property type="project" value="UniProtKB"/>
</dbReference>
<dbReference type="GO" id="GO:0036064">
    <property type="term" value="C:ciliary basal body"/>
    <property type="evidence" value="ECO:0000250"/>
    <property type="project" value="UniProtKB"/>
</dbReference>
<dbReference type="GO" id="GO:0005737">
    <property type="term" value="C:cytoplasm"/>
    <property type="evidence" value="ECO:0000250"/>
    <property type="project" value="UniProtKB"/>
</dbReference>
<dbReference type="GO" id="GO:0005829">
    <property type="term" value="C:cytosol"/>
    <property type="evidence" value="ECO:0000318"/>
    <property type="project" value="GO_Central"/>
</dbReference>
<dbReference type="GO" id="GO:0030496">
    <property type="term" value="C:midbody"/>
    <property type="evidence" value="ECO:0000250"/>
    <property type="project" value="UniProtKB"/>
</dbReference>
<dbReference type="GO" id="GO:0048471">
    <property type="term" value="C:perinuclear region of cytoplasm"/>
    <property type="evidence" value="ECO:0000250"/>
    <property type="project" value="UniProtKB"/>
</dbReference>
<dbReference type="GO" id="GO:0051301">
    <property type="term" value="P:cell division"/>
    <property type="evidence" value="ECO:0007669"/>
    <property type="project" value="UniProtKB-KW"/>
</dbReference>
<dbReference type="GO" id="GO:0031175">
    <property type="term" value="P:neuron projection development"/>
    <property type="evidence" value="ECO:0000318"/>
    <property type="project" value="GO_Central"/>
</dbReference>
<dbReference type="GO" id="GO:0032465">
    <property type="term" value="P:regulation of cytokinesis"/>
    <property type="evidence" value="ECO:0000250"/>
    <property type="project" value="UniProtKB"/>
</dbReference>
<dbReference type="FunFam" id="1.25.10.10:FF:000390">
    <property type="entry name" value="Ataxin-10"/>
    <property type="match status" value="1"/>
</dbReference>
<dbReference type="FunFam" id="1.25.10.10:FF:000897">
    <property type="entry name" value="Ataxin-10"/>
    <property type="match status" value="1"/>
</dbReference>
<dbReference type="Gene3D" id="1.25.10.10">
    <property type="entry name" value="Leucine-rich Repeat Variant"/>
    <property type="match status" value="2"/>
</dbReference>
<dbReference type="InterPro" id="IPR011989">
    <property type="entry name" value="ARM-like"/>
</dbReference>
<dbReference type="InterPro" id="IPR016024">
    <property type="entry name" value="ARM-type_fold"/>
</dbReference>
<dbReference type="InterPro" id="IPR051374">
    <property type="entry name" value="Ataxin-10/CTR86_families"/>
</dbReference>
<dbReference type="InterPro" id="IPR019156">
    <property type="entry name" value="Ataxin-10_domain"/>
</dbReference>
<dbReference type="PANTHER" id="PTHR13255">
    <property type="entry name" value="ATAXIN-10"/>
    <property type="match status" value="1"/>
</dbReference>
<dbReference type="PANTHER" id="PTHR13255:SF0">
    <property type="entry name" value="ATAXIN-10"/>
    <property type="match status" value="1"/>
</dbReference>
<dbReference type="Pfam" id="PF09759">
    <property type="entry name" value="Atx10homo_assoc"/>
    <property type="match status" value="1"/>
</dbReference>
<dbReference type="SUPFAM" id="SSF48371">
    <property type="entry name" value="ARM repeat"/>
    <property type="match status" value="1"/>
</dbReference>
<sequence length="475" mass="53102">MAAPRPPPGRLSGVMMPAPIQDLEALRALTALFKEQRNRDTAPRTIFQRVLDILKKSSHAVELACRDPSQVEHLASSLQLITECFRCLRNACIECSVNQNSIRNLGTIGVAVDLILLFRELRVEQDSLLTAFRCGLQFLGNIASRNEDSQSVVWMHAFPELFLSCLNHPDRKIVAYSSMILFTSLNSERMKELEENLNIAIDVVEAHQKQPESEWPFLIITDHFLKSPELVKAMYAKMSNQERVTLLDLMIAKIVGDEPLTKDDAPVFLSHAELIASTFVDQCKIVLKLTSEQHTDDEEALATIRLLDVLCEKTANTDLLGYLQVFPGLLERVIDLLRLIHVAGNDSTNIFSACASIKADGDVSSVAEGFKSHLIRLIGNLCYKNKDNQDKVNELDGIPLILDSCGLDDSNPFLTQWVVYAIRNLTEDNSQNQDLIAKMEEQGLADASLLKKMGFEVEKRGDKLILKSTSDTPQL</sequence>
<name>ATX10_BOVIN</name>
<proteinExistence type="evidence at transcript level"/>
<reference key="1">
    <citation type="submission" date="2005-11" db="EMBL/GenBank/DDBJ databases">
        <authorList>
            <consortium name="NIH - Mammalian Gene Collection (MGC) project"/>
        </authorList>
    </citation>
    <scope>NUCLEOTIDE SEQUENCE [LARGE SCALE MRNA]</scope>
    <source>
        <strain>Crossbred X Angus</strain>
        <tissue>Liver</tissue>
    </source>
</reference>
<organism>
    <name type="scientific">Bos taurus</name>
    <name type="common">Bovine</name>
    <dbReference type="NCBI Taxonomy" id="9913"/>
    <lineage>
        <taxon>Eukaryota</taxon>
        <taxon>Metazoa</taxon>
        <taxon>Chordata</taxon>
        <taxon>Craniata</taxon>
        <taxon>Vertebrata</taxon>
        <taxon>Euteleostomi</taxon>
        <taxon>Mammalia</taxon>
        <taxon>Eutheria</taxon>
        <taxon>Laurasiatheria</taxon>
        <taxon>Artiodactyla</taxon>
        <taxon>Ruminantia</taxon>
        <taxon>Pecora</taxon>
        <taxon>Bovidae</taxon>
        <taxon>Bovinae</taxon>
        <taxon>Bos</taxon>
    </lineage>
</organism>
<evidence type="ECO:0000250" key="1">
    <source>
        <dbReference type="UniProtKB" id="P28658"/>
    </source>
</evidence>
<evidence type="ECO:0000250" key="2">
    <source>
        <dbReference type="UniProtKB" id="Q9ER24"/>
    </source>
</evidence>
<evidence type="ECO:0000250" key="3">
    <source>
        <dbReference type="UniProtKB" id="Q9UBB4"/>
    </source>
</evidence>
<evidence type="ECO:0000305" key="4"/>
<accession>Q2TBW0</accession>
<comment type="function">
    <text evidence="1 2 3">May play a role in the regulation of cytokinesis (By similarity). May play a role in signaling by stimulating protein glycosylation. Induces neuritogenesis by activating the Ras-MAP kinase pathway and is necessary for the survival of cerebellar neurons (By similarity). Does not appear to play a major role in ciliogenesis (By similarity).</text>
</comment>
<comment type="subunit">
    <text evidence="2 3">Homooligomer (By similarity). Interacts with GNB2. Interacts with IQCB1 (By similarity). Interacts with OGT (By similarity).</text>
</comment>
<comment type="subcellular location">
    <subcellularLocation>
        <location evidence="3">Cytoplasm</location>
        <location evidence="3">Perinuclear region</location>
    </subcellularLocation>
    <subcellularLocation>
        <location evidence="1">Cytoplasm</location>
        <location evidence="1">Cytoskeleton</location>
        <location evidence="1">Cilium basal body</location>
    </subcellularLocation>
    <subcellularLocation>
        <location evidence="1">Cytoplasm</location>
        <location evidence="1">Cytoskeleton</location>
        <location evidence="1">Microtubule organizing center</location>
        <location evidence="1">Centrosome</location>
        <location evidence="1">Centriole</location>
    </subcellularLocation>
    <subcellularLocation>
        <location evidence="3">Midbody</location>
    </subcellularLocation>
    <text evidence="3">Localizes to the midbody during telophase.</text>
</comment>
<comment type="PTM">
    <text evidence="3">Polyubiquitinated.</text>
</comment>
<comment type="PTM">
    <text evidence="3">Phosphorylation at Ser-12 by AURKB promotes the association of ATXN10 with PLK1. Phosphorylation at Ser-77 and Thr-82 by PLK1 may play a role in the regulation of cytokinesis and may stimulate the proteasome-mediated degradation of ATXN10.</text>
</comment>
<comment type="similarity">
    <text evidence="4">Belongs to the ataxin-10 family.</text>
</comment>
<gene>
    <name type="primary">ATXN10</name>
</gene>